<keyword id="KW-0687">Ribonucleoprotein</keyword>
<keyword id="KW-0689">Ribosomal protein</keyword>
<protein>
    <recommendedName>
        <fullName evidence="1">Large ribosomal subunit protein bL34</fullName>
    </recommendedName>
    <alternativeName>
        <fullName evidence="2">50S ribosomal protein L34</fullName>
    </alternativeName>
</protein>
<reference key="1">
    <citation type="submission" date="2007-11" db="EMBL/GenBank/DDBJ databases">
        <authorList>
            <consortium name="The Salmonella enterica serovar Paratyphi B Genome Sequencing Project"/>
            <person name="McClelland M."/>
            <person name="Sanderson E.K."/>
            <person name="Porwollik S."/>
            <person name="Spieth J."/>
            <person name="Clifton W.S."/>
            <person name="Fulton R."/>
            <person name="Cordes M."/>
            <person name="Wollam A."/>
            <person name="Shah N."/>
            <person name="Pepin K."/>
            <person name="Bhonagiri V."/>
            <person name="Nash W."/>
            <person name="Johnson M."/>
            <person name="Thiruvilangam P."/>
            <person name="Wilson R."/>
        </authorList>
    </citation>
    <scope>NUCLEOTIDE SEQUENCE [LARGE SCALE GENOMIC DNA]</scope>
    <source>
        <strain>ATCC BAA-1250 / SPB7</strain>
    </source>
</reference>
<evidence type="ECO:0000255" key="1">
    <source>
        <dbReference type="HAMAP-Rule" id="MF_00391"/>
    </source>
</evidence>
<evidence type="ECO:0000305" key="2"/>
<accession>A9MX79</accession>
<proteinExistence type="inferred from homology"/>
<gene>
    <name evidence="1" type="primary">rpmH</name>
    <name type="ordered locus">SPAB_04779</name>
</gene>
<feature type="chain" id="PRO_1000080265" description="Large ribosomal subunit protein bL34">
    <location>
        <begin position="1"/>
        <end position="46"/>
    </location>
</feature>
<organism>
    <name type="scientific">Salmonella paratyphi B (strain ATCC BAA-1250 / SPB7)</name>
    <dbReference type="NCBI Taxonomy" id="1016998"/>
    <lineage>
        <taxon>Bacteria</taxon>
        <taxon>Pseudomonadati</taxon>
        <taxon>Pseudomonadota</taxon>
        <taxon>Gammaproteobacteria</taxon>
        <taxon>Enterobacterales</taxon>
        <taxon>Enterobacteriaceae</taxon>
        <taxon>Salmonella</taxon>
    </lineage>
</organism>
<name>RL34_SALPB</name>
<dbReference type="EMBL" id="CP000886">
    <property type="protein sequence ID" value="ABX70090.1"/>
    <property type="molecule type" value="Genomic_DNA"/>
</dbReference>
<dbReference type="RefSeq" id="WP_000831330.1">
    <property type="nucleotide sequence ID" value="NC_010102.1"/>
</dbReference>
<dbReference type="SMR" id="A9MX79"/>
<dbReference type="GeneID" id="98190980"/>
<dbReference type="KEGG" id="spq:SPAB_04779"/>
<dbReference type="PATRIC" id="fig|1016998.12.peg.4496"/>
<dbReference type="HOGENOM" id="CLU_129938_2_1_6"/>
<dbReference type="BioCyc" id="SENT1016998:SPAB_RS19400-MONOMER"/>
<dbReference type="Proteomes" id="UP000008556">
    <property type="component" value="Chromosome"/>
</dbReference>
<dbReference type="GO" id="GO:1990904">
    <property type="term" value="C:ribonucleoprotein complex"/>
    <property type="evidence" value="ECO:0007669"/>
    <property type="project" value="UniProtKB-KW"/>
</dbReference>
<dbReference type="GO" id="GO:0005840">
    <property type="term" value="C:ribosome"/>
    <property type="evidence" value="ECO:0007669"/>
    <property type="project" value="UniProtKB-KW"/>
</dbReference>
<dbReference type="GO" id="GO:0003735">
    <property type="term" value="F:structural constituent of ribosome"/>
    <property type="evidence" value="ECO:0007669"/>
    <property type="project" value="InterPro"/>
</dbReference>
<dbReference type="GO" id="GO:0006412">
    <property type="term" value="P:translation"/>
    <property type="evidence" value="ECO:0007669"/>
    <property type="project" value="UniProtKB-UniRule"/>
</dbReference>
<dbReference type="FunFam" id="1.10.287.3980:FF:000001">
    <property type="entry name" value="Mitochondrial ribosomal protein L34"/>
    <property type="match status" value="1"/>
</dbReference>
<dbReference type="Gene3D" id="1.10.287.3980">
    <property type="match status" value="1"/>
</dbReference>
<dbReference type="HAMAP" id="MF_00391">
    <property type="entry name" value="Ribosomal_bL34"/>
    <property type="match status" value="1"/>
</dbReference>
<dbReference type="InterPro" id="IPR000271">
    <property type="entry name" value="Ribosomal_bL34"/>
</dbReference>
<dbReference type="InterPro" id="IPR020939">
    <property type="entry name" value="Ribosomal_bL34_CS"/>
</dbReference>
<dbReference type="NCBIfam" id="TIGR01030">
    <property type="entry name" value="rpmH_bact"/>
    <property type="match status" value="1"/>
</dbReference>
<dbReference type="PANTHER" id="PTHR14503:SF4">
    <property type="entry name" value="LARGE RIBOSOMAL SUBUNIT PROTEIN BL34M"/>
    <property type="match status" value="1"/>
</dbReference>
<dbReference type="PANTHER" id="PTHR14503">
    <property type="entry name" value="MITOCHONDRIAL RIBOSOMAL PROTEIN 34 FAMILY MEMBER"/>
    <property type="match status" value="1"/>
</dbReference>
<dbReference type="Pfam" id="PF00468">
    <property type="entry name" value="Ribosomal_L34"/>
    <property type="match status" value="1"/>
</dbReference>
<dbReference type="PROSITE" id="PS00784">
    <property type="entry name" value="RIBOSOMAL_L34"/>
    <property type="match status" value="1"/>
</dbReference>
<comment type="similarity">
    <text evidence="1">Belongs to the bacterial ribosomal protein bL34 family.</text>
</comment>
<sequence>MKRTFQPSVLKRNRSHGFRARMATKNGRQVLARRRAKGRARLTVSK</sequence>